<name>SGT1_MOUSE</name>
<evidence type="ECO:0000250" key="1"/>
<evidence type="ECO:0000250" key="2">
    <source>
        <dbReference type="UniProtKB" id="Q08446"/>
    </source>
</evidence>
<evidence type="ECO:0000250" key="3">
    <source>
        <dbReference type="UniProtKB" id="Q9Y2Z0"/>
    </source>
</evidence>
<evidence type="ECO:0000255" key="4">
    <source>
        <dbReference type="PROSITE-ProRule" id="PRU00386"/>
    </source>
</evidence>
<evidence type="ECO:0000255" key="5">
    <source>
        <dbReference type="PROSITE-ProRule" id="PRU00547"/>
    </source>
</evidence>
<evidence type="ECO:0000305" key="6"/>
<evidence type="ECO:0000312" key="7">
    <source>
        <dbReference type="MGI" id="MGI:1915205"/>
    </source>
</evidence>
<gene>
    <name evidence="7" type="primary">Sugt1</name>
</gene>
<sequence length="336" mass="38159">MAAAAAGPASSQRLFQSFSDALIDGDPQAALEELTKALEQNPDDAQYYCQRAYCHILLGKYRDGIADVKKSLELNPNNCTALLRKGICEYHEKDYASALETFAEGQKLDSTDTNFDTWIKRCQEIQNGSESEVSASQRTQSKIKYDWYQTESHVIITLMIKSVQKNDVRVGFSERELSALVKIPAGEDYSLKLRLLHPIIPEQSTFKVLSTKIEIKMKKPEAVRWEKLEGQGDEPTPKQFTADVKNMYPSSSHYTRNWDKLVGEIKEEEKNEKLEGDAALNKLFQQIYSDGSDEVKRAMNKSFMESGGTVLSTNWSDVGKRKVEINPPDDMEWKQY</sequence>
<reference key="1">
    <citation type="journal article" date="2005" name="Science">
        <title>The transcriptional landscape of the mammalian genome.</title>
        <authorList>
            <person name="Carninci P."/>
            <person name="Kasukawa T."/>
            <person name="Katayama S."/>
            <person name="Gough J."/>
            <person name="Frith M.C."/>
            <person name="Maeda N."/>
            <person name="Oyama R."/>
            <person name="Ravasi T."/>
            <person name="Lenhard B."/>
            <person name="Wells C."/>
            <person name="Kodzius R."/>
            <person name="Shimokawa K."/>
            <person name="Bajic V.B."/>
            <person name="Brenner S.E."/>
            <person name="Batalov S."/>
            <person name="Forrest A.R."/>
            <person name="Zavolan M."/>
            <person name="Davis M.J."/>
            <person name="Wilming L.G."/>
            <person name="Aidinis V."/>
            <person name="Allen J.E."/>
            <person name="Ambesi-Impiombato A."/>
            <person name="Apweiler R."/>
            <person name="Aturaliya R.N."/>
            <person name="Bailey T.L."/>
            <person name="Bansal M."/>
            <person name="Baxter L."/>
            <person name="Beisel K.W."/>
            <person name="Bersano T."/>
            <person name="Bono H."/>
            <person name="Chalk A.M."/>
            <person name="Chiu K.P."/>
            <person name="Choudhary V."/>
            <person name="Christoffels A."/>
            <person name="Clutterbuck D.R."/>
            <person name="Crowe M.L."/>
            <person name="Dalla E."/>
            <person name="Dalrymple B.P."/>
            <person name="de Bono B."/>
            <person name="Della Gatta G."/>
            <person name="di Bernardo D."/>
            <person name="Down T."/>
            <person name="Engstrom P."/>
            <person name="Fagiolini M."/>
            <person name="Faulkner G."/>
            <person name="Fletcher C.F."/>
            <person name="Fukushima T."/>
            <person name="Furuno M."/>
            <person name="Futaki S."/>
            <person name="Gariboldi M."/>
            <person name="Georgii-Hemming P."/>
            <person name="Gingeras T.R."/>
            <person name="Gojobori T."/>
            <person name="Green R.E."/>
            <person name="Gustincich S."/>
            <person name="Harbers M."/>
            <person name="Hayashi Y."/>
            <person name="Hensch T.K."/>
            <person name="Hirokawa N."/>
            <person name="Hill D."/>
            <person name="Huminiecki L."/>
            <person name="Iacono M."/>
            <person name="Ikeo K."/>
            <person name="Iwama A."/>
            <person name="Ishikawa T."/>
            <person name="Jakt M."/>
            <person name="Kanapin A."/>
            <person name="Katoh M."/>
            <person name="Kawasawa Y."/>
            <person name="Kelso J."/>
            <person name="Kitamura H."/>
            <person name="Kitano H."/>
            <person name="Kollias G."/>
            <person name="Krishnan S.P."/>
            <person name="Kruger A."/>
            <person name="Kummerfeld S.K."/>
            <person name="Kurochkin I.V."/>
            <person name="Lareau L.F."/>
            <person name="Lazarevic D."/>
            <person name="Lipovich L."/>
            <person name="Liu J."/>
            <person name="Liuni S."/>
            <person name="McWilliam S."/>
            <person name="Madan Babu M."/>
            <person name="Madera M."/>
            <person name="Marchionni L."/>
            <person name="Matsuda H."/>
            <person name="Matsuzawa S."/>
            <person name="Miki H."/>
            <person name="Mignone F."/>
            <person name="Miyake S."/>
            <person name="Morris K."/>
            <person name="Mottagui-Tabar S."/>
            <person name="Mulder N."/>
            <person name="Nakano N."/>
            <person name="Nakauchi H."/>
            <person name="Ng P."/>
            <person name="Nilsson R."/>
            <person name="Nishiguchi S."/>
            <person name="Nishikawa S."/>
            <person name="Nori F."/>
            <person name="Ohara O."/>
            <person name="Okazaki Y."/>
            <person name="Orlando V."/>
            <person name="Pang K.C."/>
            <person name="Pavan W.J."/>
            <person name="Pavesi G."/>
            <person name="Pesole G."/>
            <person name="Petrovsky N."/>
            <person name="Piazza S."/>
            <person name="Reed J."/>
            <person name="Reid J.F."/>
            <person name="Ring B.Z."/>
            <person name="Ringwald M."/>
            <person name="Rost B."/>
            <person name="Ruan Y."/>
            <person name="Salzberg S.L."/>
            <person name="Sandelin A."/>
            <person name="Schneider C."/>
            <person name="Schoenbach C."/>
            <person name="Sekiguchi K."/>
            <person name="Semple C.A."/>
            <person name="Seno S."/>
            <person name="Sessa L."/>
            <person name="Sheng Y."/>
            <person name="Shibata Y."/>
            <person name="Shimada H."/>
            <person name="Shimada K."/>
            <person name="Silva D."/>
            <person name="Sinclair B."/>
            <person name="Sperling S."/>
            <person name="Stupka E."/>
            <person name="Sugiura K."/>
            <person name="Sultana R."/>
            <person name="Takenaka Y."/>
            <person name="Taki K."/>
            <person name="Tammoja K."/>
            <person name="Tan S.L."/>
            <person name="Tang S."/>
            <person name="Taylor M.S."/>
            <person name="Tegner J."/>
            <person name="Teichmann S.A."/>
            <person name="Ueda H.R."/>
            <person name="van Nimwegen E."/>
            <person name="Verardo R."/>
            <person name="Wei C.L."/>
            <person name="Yagi K."/>
            <person name="Yamanishi H."/>
            <person name="Zabarovsky E."/>
            <person name="Zhu S."/>
            <person name="Zimmer A."/>
            <person name="Hide W."/>
            <person name="Bult C."/>
            <person name="Grimmond S.M."/>
            <person name="Teasdale R.D."/>
            <person name="Liu E.T."/>
            <person name="Brusic V."/>
            <person name="Quackenbush J."/>
            <person name="Wahlestedt C."/>
            <person name="Mattick J.S."/>
            <person name="Hume D.A."/>
            <person name="Kai C."/>
            <person name="Sasaki D."/>
            <person name="Tomaru Y."/>
            <person name="Fukuda S."/>
            <person name="Kanamori-Katayama M."/>
            <person name="Suzuki M."/>
            <person name="Aoki J."/>
            <person name="Arakawa T."/>
            <person name="Iida J."/>
            <person name="Imamura K."/>
            <person name="Itoh M."/>
            <person name="Kato T."/>
            <person name="Kawaji H."/>
            <person name="Kawagashira N."/>
            <person name="Kawashima T."/>
            <person name="Kojima M."/>
            <person name="Kondo S."/>
            <person name="Konno H."/>
            <person name="Nakano K."/>
            <person name="Ninomiya N."/>
            <person name="Nishio T."/>
            <person name="Okada M."/>
            <person name="Plessy C."/>
            <person name="Shibata K."/>
            <person name="Shiraki T."/>
            <person name="Suzuki S."/>
            <person name="Tagami M."/>
            <person name="Waki K."/>
            <person name="Watahiki A."/>
            <person name="Okamura-Oho Y."/>
            <person name="Suzuki H."/>
            <person name="Kawai J."/>
            <person name="Hayashizaki Y."/>
        </authorList>
    </citation>
    <scope>NUCLEOTIDE SEQUENCE [LARGE SCALE MRNA]</scope>
    <source>
        <strain>C57BL/6J</strain>
        <tissue>Cerebellum</tissue>
        <tissue>Embryo</tissue>
        <tissue>Pancreas</tissue>
        <tissue>Spinal cord</tissue>
        <tissue>Sympathetic ganglion</tissue>
    </source>
</reference>
<reference key="2">
    <citation type="journal article" date="2004" name="Genome Res.">
        <title>The status, quality, and expansion of the NIH full-length cDNA project: the Mammalian Gene Collection (MGC).</title>
        <authorList>
            <consortium name="The MGC Project Team"/>
        </authorList>
    </citation>
    <scope>NUCLEOTIDE SEQUENCE [LARGE SCALE MRNA]</scope>
    <source>
        <tissue>Mammary gland</tissue>
    </source>
</reference>
<reference key="3">
    <citation type="journal article" date="2010" name="Cell">
        <title>A tissue-specific atlas of mouse protein phosphorylation and expression.</title>
        <authorList>
            <person name="Huttlin E.L."/>
            <person name="Jedrychowski M.P."/>
            <person name="Elias J.E."/>
            <person name="Goswami T."/>
            <person name="Rad R."/>
            <person name="Beausoleil S.A."/>
            <person name="Villen J."/>
            <person name="Haas W."/>
            <person name="Sowa M.E."/>
            <person name="Gygi S.P."/>
        </authorList>
    </citation>
    <scope>IDENTIFICATION BY MASS SPECTROMETRY [LARGE SCALE ANALYSIS]</scope>
    <source>
        <tissue>Brain</tissue>
        <tissue>Brown adipose tissue</tissue>
        <tissue>Heart</tissue>
        <tissue>Kidney</tissue>
        <tissue>Liver</tissue>
        <tissue>Lung</tissue>
        <tissue>Pancreas</tissue>
        <tissue>Spleen</tissue>
        <tissue>Testis</tissue>
    </source>
</reference>
<dbReference type="EMBL" id="AK007881">
    <property type="protein sequence ID" value="BAB25326.1"/>
    <property type="molecule type" value="mRNA"/>
</dbReference>
<dbReference type="EMBL" id="AK020433">
    <property type="protein sequence ID" value="BAB32098.1"/>
    <property type="molecule type" value="mRNA"/>
</dbReference>
<dbReference type="EMBL" id="AK045153">
    <property type="protein sequence ID" value="BAC32241.1"/>
    <property type="molecule type" value="mRNA"/>
</dbReference>
<dbReference type="EMBL" id="AK082328">
    <property type="protein sequence ID" value="BAC38466.1"/>
    <property type="molecule type" value="mRNA"/>
</dbReference>
<dbReference type="EMBL" id="AK141416">
    <property type="protein sequence ID" value="BAE24677.1"/>
    <property type="molecule type" value="mRNA"/>
</dbReference>
<dbReference type="EMBL" id="AK148838">
    <property type="protein sequence ID" value="BAE28673.1"/>
    <property type="molecule type" value="mRNA"/>
</dbReference>
<dbReference type="EMBL" id="BC009167">
    <property type="protein sequence ID" value="AAH09167.1"/>
    <property type="molecule type" value="mRNA"/>
</dbReference>
<dbReference type="CCDS" id="CCDS36988.1"/>
<dbReference type="RefSeq" id="NP_080750.1">
    <property type="nucleotide sequence ID" value="NM_026474.6"/>
</dbReference>
<dbReference type="SMR" id="Q9CX34"/>
<dbReference type="BioGRID" id="212563">
    <property type="interactions" value="22"/>
</dbReference>
<dbReference type="FunCoup" id="Q9CX34">
    <property type="interactions" value="3262"/>
</dbReference>
<dbReference type="IntAct" id="Q9CX34">
    <property type="interactions" value="1"/>
</dbReference>
<dbReference type="STRING" id="10090.ENSMUSP00000052942"/>
<dbReference type="iPTMnet" id="Q9CX34"/>
<dbReference type="PhosphoSitePlus" id="Q9CX34"/>
<dbReference type="SwissPalm" id="Q9CX34"/>
<dbReference type="REPRODUCTION-2DPAGE" id="Q9CX34"/>
<dbReference type="jPOST" id="Q9CX34"/>
<dbReference type="PaxDb" id="10090-ENSMUSP00000052942"/>
<dbReference type="PeptideAtlas" id="Q9CX34"/>
<dbReference type="ProteomicsDB" id="261016"/>
<dbReference type="Pumba" id="Q9CX34"/>
<dbReference type="Antibodypedia" id="24223">
    <property type="antibodies" value="263 antibodies from 31 providers"/>
</dbReference>
<dbReference type="DNASU" id="67955"/>
<dbReference type="Ensembl" id="ENSMUST00000054908.10">
    <property type="protein sequence ID" value="ENSMUSP00000052942.9"/>
    <property type="gene ID" value="ENSMUSG00000022024.11"/>
</dbReference>
<dbReference type="GeneID" id="67955"/>
<dbReference type="KEGG" id="mmu:67955"/>
<dbReference type="UCSC" id="uc007ute.1">
    <property type="organism name" value="mouse"/>
</dbReference>
<dbReference type="AGR" id="MGI:1915205"/>
<dbReference type="CTD" id="10910"/>
<dbReference type="MGI" id="MGI:1915205">
    <property type="gene designation" value="Sugt1"/>
</dbReference>
<dbReference type="VEuPathDB" id="HostDB:ENSMUSG00000022024"/>
<dbReference type="eggNOG" id="KOG0548">
    <property type="taxonomic scope" value="Eukaryota"/>
</dbReference>
<dbReference type="eggNOG" id="KOG1309">
    <property type="taxonomic scope" value="Eukaryota"/>
</dbReference>
<dbReference type="GeneTree" id="ENSGT00390000013700"/>
<dbReference type="HOGENOM" id="CLU_039532_1_1_1"/>
<dbReference type="InParanoid" id="Q9CX34"/>
<dbReference type="OMA" id="WIKKCEE"/>
<dbReference type="OrthoDB" id="1898560at2759"/>
<dbReference type="PhylomeDB" id="Q9CX34"/>
<dbReference type="TreeFam" id="TF105979"/>
<dbReference type="Reactome" id="R-MMU-844456">
    <property type="pathway name" value="The NLRP3 inflammasome"/>
</dbReference>
<dbReference type="BioGRID-ORCS" id="67955">
    <property type="hits" value="20 hits in 79 CRISPR screens"/>
</dbReference>
<dbReference type="ChiTaRS" id="Sugt1">
    <property type="organism name" value="mouse"/>
</dbReference>
<dbReference type="PRO" id="PR:Q9CX34"/>
<dbReference type="Proteomes" id="UP000000589">
    <property type="component" value="Chromosome 14"/>
</dbReference>
<dbReference type="RNAct" id="Q9CX34">
    <property type="molecule type" value="protein"/>
</dbReference>
<dbReference type="Bgee" id="ENSMUSG00000022024">
    <property type="expression patterns" value="Expressed in morula and 263 other cell types or tissues"/>
</dbReference>
<dbReference type="GO" id="GO:0005737">
    <property type="term" value="C:cytoplasm"/>
    <property type="evidence" value="ECO:0000314"/>
    <property type="project" value="MGI"/>
</dbReference>
<dbReference type="GO" id="GO:0005829">
    <property type="term" value="C:cytosol"/>
    <property type="evidence" value="ECO:0007669"/>
    <property type="project" value="Ensembl"/>
</dbReference>
<dbReference type="GO" id="GO:0000776">
    <property type="term" value="C:kinetochore"/>
    <property type="evidence" value="ECO:0000314"/>
    <property type="project" value="MGI"/>
</dbReference>
<dbReference type="GO" id="GO:0016604">
    <property type="term" value="C:nuclear body"/>
    <property type="evidence" value="ECO:0007669"/>
    <property type="project" value="Ensembl"/>
</dbReference>
<dbReference type="GO" id="GO:0032991">
    <property type="term" value="C:protein-containing complex"/>
    <property type="evidence" value="ECO:0000266"/>
    <property type="project" value="MGI"/>
</dbReference>
<dbReference type="GO" id="GO:0106222">
    <property type="term" value="F:lncRNA binding"/>
    <property type="evidence" value="ECO:0000353"/>
    <property type="project" value="MGI"/>
</dbReference>
<dbReference type="GO" id="GO:0051087">
    <property type="term" value="F:protein-folding chaperone binding"/>
    <property type="evidence" value="ECO:0007669"/>
    <property type="project" value="InterPro"/>
</dbReference>
<dbReference type="GO" id="GO:0051382">
    <property type="term" value="P:kinetochore assembly"/>
    <property type="evidence" value="ECO:0000315"/>
    <property type="project" value="MGI"/>
</dbReference>
<dbReference type="GO" id="GO:0031647">
    <property type="term" value="P:regulation of protein stability"/>
    <property type="evidence" value="ECO:0007669"/>
    <property type="project" value="Ensembl"/>
</dbReference>
<dbReference type="GO" id="GO:0014841">
    <property type="term" value="P:skeletal muscle satellite cell proliferation"/>
    <property type="evidence" value="ECO:0000314"/>
    <property type="project" value="MGI"/>
</dbReference>
<dbReference type="GO" id="GO:0007051">
    <property type="term" value="P:spindle organization"/>
    <property type="evidence" value="ECO:0000315"/>
    <property type="project" value="MGI"/>
</dbReference>
<dbReference type="CDD" id="cd06489">
    <property type="entry name" value="p23_CS_hSgt1_like"/>
    <property type="match status" value="1"/>
</dbReference>
<dbReference type="FunFam" id="1.25.40.10:FF:000244">
    <property type="entry name" value="SGT1 homolog, MIS12 kinetochore complex assembly cochaperone"/>
    <property type="match status" value="1"/>
</dbReference>
<dbReference type="FunFam" id="2.60.40.790:FF:000012">
    <property type="entry name" value="SGT1 homolog, MIS12 kinetochore complex assembly cochaperone"/>
    <property type="match status" value="1"/>
</dbReference>
<dbReference type="Gene3D" id="2.60.40.790">
    <property type="match status" value="1"/>
</dbReference>
<dbReference type="Gene3D" id="1.25.40.10">
    <property type="entry name" value="Tetratricopeptide repeat domain"/>
    <property type="match status" value="1"/>
</dbReference>
<dbReference type="InterPro" id="IPR007052">
    <property type="entry name" value="CS_dom"/>
</dbReference>
<dbReference type="InterPro" id="IPR008978">
    <property type="entry name" value="HSP20-like_chaperone"/>
</dbReference>
<dbReference type="InterPro" id="IPR007699">
    <property type="entry name" value="SGS_dom"/>
</dbReference>
<dbReference type="InterPro" id="IPR044563">
    <property type="entry name" value="Sgt1-like"/>
</dbReference>
<dbReference type="InterPro" id="IPR011990">
    <property type="entry name" value="TPR-like_helical_dom_sf"/>
</dbReference>
<dbReference type="InterPro" id="IPR019734">
    <property type="entry name" value="TPR_rpt"/>
</dbReference>
<dbReference type="PANTHER" id="PTHR45862">
    <property type="entry name" value="PROTEIN SGT1 HOMOLOG"/>
    <property type="match status" value="1"/>
</dbReference>
<dbReference type="Pfam" id="PF04969">
    <property type="entry name" value="CS"/>
    <property type="match status" value="1"/>
</dbReference>
<dbReference type="Pfam" id="PF05002">
    <property type="entry name" value="SGS"/>
    <property type="match status" value="1"/>
</dbReference>
<dbReference type="Pfam" id="PF13431">
    <property type="entry name" value="TPR_17"/>
    <property type="match status" value="1"/>
</dbReference>
<dbReference type="SMART" id="SM00028">
    <property type="entry name" value="TPR"/>
    <property type="match status" value="2"/>
</dbReference>
<dbReference type="SUPFAM" id="SSF49764">
    <property type="entry name" value="HSP20-like chaperones"/>
    <property type="match status" value="1"/>
</dbReference>
<dbReference type="SUPFAM" id="SSF48452">
    <property type="entry name" value="TPR-like"/>
    <property type="match status" value="1"/>
</dbReference>
<dbReference type="PROSITE" id="PS51203">
    <property type="entry name" value="CS"/>
    <property type="match status" value="1"/>
</dbReference>
<dbReference type="PROSITE" id="PS51048">
    <property type="entry name" value="SGS"/>
    <property type="match status" value="1"/>
</dbReference>
<dbReference type="PROSITE" id="PS50005">
    <property type="entry name" value="TPR"/>
    <property type="match status" value="3"/>
</dbReference>
<dbReference type="PROSITE" id="PS50293">
    <property type="entry name" value="TPR_REGION"/>
    <property type="match status" value="1"/>
</dbReference>
<accession>Q9CX34</accession>
<accession>Q3UF88</accession>
<accession>Q9CRE7</accession>
<accession>Q9D8M6</accession>
<keyword id="KW-0007">Acetylation</keyword>
<keyword id="KW-0963">Cytoplasm</keyword>
<keyword id="KW-1017">Isopeptide bond</keyword>
<keyword id="KW-0539">Nucleus</keyword>
<keyword id="KW-0597">Phosphoprotein</keyword>
<keyword id="KW-1185">Reference proteome</keyword>
<keyword id="KW-0677">Repeat</keyword>
<keyword id="KW-0802">TPR repeat</keyword>
<keyword id="KW-0832">Ubl conjugation</keyword>
<keyword id="KW-0833">Ubl conjugation pathway</keyword>
<protein>
    <recommendedName>
        <fullName evidence="2">Protein SGT1 homolog</fullName>
    </recommendedName>
    <alternativeName>
        <fullName evidence="2">Suppressor of G2 allele of SKP1 homolog</fullName>
    </alternativeName>
</protein>
<comment type="function">
    <text>May play a role in ubiquitination and subsequent proteasomal degradation of target proteins.</text>
</comment>
<comment type="subunit">
    <text evidence="1">Probably associates with SCF (SKP1-CUL1-F-box protein) complex through interaction with SKP1. Interacts with S100A6. Interacts with HSP90 (By similarity).</text>
</comment>
<comment type="subcellular location">
    <subcellularLocation>
        <location evidence="1">Cytoplasm</location>
    </subcellularLocation>
    <subcellularLocation>
        <location evidence="1">Nucleus</location>
    </subcellularLocation>
    <text evidence="1">Translocates the to nucleus upon heat shock, requiring S100A6.</text>
</comment>
<comment type="domain">
    <text evidence="1">The CS domain mediates interaction with HSP90.</text>
</comment>
<comment type="PTM">
    <text evidence="1">Phosphorylated at Ser-252 and Ser-302, dephosphorylation promotes nuclear translocation, most likely due to disruption of the SUGT1-HSP90 complex.</text>
</comment>
<comment type="similarity">
    <text evidence="6">Belongs to the SGT1 family.</text>
</comment>
<feature type="initiator methionine" description="Removed" evidence="3">
    <location>
        <position position="1"/>
    </location>
</feature>
<feature type="chain" id="PRO_0000106333" description="Protein SGT1 homolog">
    <location>
        <begin position="2"/>
        <end position="336"/>
    </location>
</feature>
<feature type="repeat" description="TPR 1">
    <location>
        <begin position="11"/>
        <end position="44"/>
    </location>
</feature>
<feature type="repeat" description="TPR 2">
    <location>
        <begin position="45"/>
        <end position="78"/>
    </location>
</feature>
<feature type="repeat" description="TPR 3">
    <location>
        <begin position="79"/>
        <end position="112"/>
    </location>
</feature>
<feature type="domain" description="CS" evidence="5">
    <location>
        <begin position="140"/>
        <end position="229"/>
    </location>
</feature>
<feature type="domain" description="SGS" evidence="4">
    <location>
        <begin position="247"/>
        <end position="336"/>
    </location>
</feature>
<feature type="modified residue" description="N-acetylalanine" evidence="3">
    <location>
        <position position="2"/>
    </location>
</feature>
<feature type="modified residue" description="Phosphothreonine" evidence="3">
    <location>
        <position position="236"/>
    </location>
</feature>
<feature type="modified residue" description="Phosphoserine" evidence="3">
    <location>
        <position position="252"/>
    </location>
</feature>
<feature type="modified residue" description="Phosphothreonine" evidence="3">
    <location>
        <position position="255"/>
    </location>
</feature>
<feature type="modified residue" description="Phosphoserine" evidence="3">
    <location>
        <position position="302"/>
    </location>
</feature>
<feature type="cross-link" description="Glycyl lysine isopeptide (Lys-Gly) (interchain with G-Cter in SUMO1); alternate" evidence="3">
    <location>
        <position position="266"/>
    </location>
</feature>
<feature type="cross-link" description="Glycyl lysine isopeptide (Lys-Gly) (interchain with G-Cter in SUMO2); alternate" evidence="3">
    <location>
        <position position="266"/>
    </location>
</feature>
<feature type="sequence conflict" description="In Ref. 1; BAB25326." evidence="6" ref="1">
    <original>D</original>
    <variation>N</variation>
    <location>
        <position position="20"/>
    </location>
</feature>
<feature type="sequence conflict" description="In Ref. 1; BAB25326." evidence="6" ref="1">
    <original>T</original>
    <variation>I</variation>
    <location>
        <position position="113"/>
    </location>
</feature>
<organism>
    <name type="scientific">Mus musculus</name>
    <name type="common">Mouse</name>
    <dbReference type="NCBI Taxonomy" id="10090"/>
    <lineage>
        <taxon>Eukaryota</taxon>
        <taxon>Metazoa</taxon>
        <taxon>Chordata</taxon>
        <taxon>Craniata</taxon>
        <taxon>Vertebrata</taxon>
        <taxon>Euteleostomi</taxon>
        <taxon>Mammalia</taxon>
        <taxon>Eutheria</taxon>
        <taxon>Euarchontoglires</taxon>
        <taxon>Glires</taxon>
        <taxon>Rodentia</taxon>
        <taxon>Myomorpha</taxon>
        <taxon>Muroidea</taxon>
        <taxon>Muridae</taxon>
        <taxon>Murinae</taxon>
        <taxon>Mus</taxon>
        <taxon>Mus</taxon>
    </lineage>
</organism>
<proteinExistence type="evidence at protein level"/>